<name>PLAS_SYNY3</name>
<dbReference type="EMBL" id="X54105">
    <property type="protein sequence ID" value="CAA38038.1"/>
    <property type="molecule type" value="Genomic_DNA"/>
</dbReference>
<dbReference type="EMBL" id="BA000022">
    <property type="protein sequence ID" value="BAA10227.1"/>
    <property type="molecule type" value="Genomic_DNA"/>
</dbReference>
<dbReference type="PIR" id="S76375">
    <property type="entry name" value="S76375"/>
</dbReference>
<dbReference type="PDB" id="1J5C">
    <property type="method" value="NMR"/>
    <property type="chains" value="A=29-126"/>
</dbReference>
<dbReference type="PDB" id="1J5D">
    <property type="method" value="NMR"/>
    <property type="chains" value="A=29-126"/>
</dbReference>
<dbReference type="PDB" id="1JXD">
    <property type="method" value="NMR"/>
    <property type="chains" value="A=29-126"/>
</dbReference>
<dbReference type="PDB" id="1JXF">
    <property type="method" value="NMR"/>
    <property type="chains" value="A=29-126"/>
</dbReference>
<dbReference type="PDB" id="1M9W">
    <property type="method" value="NMR"/>
    <property type="chains" value="A=29-126"/>
</dbReference>
<dbReference type="PDB" id="1PCS">
    <property type="method" value="X-ray"/>
    <property type="resolution" value="2.15 A"/>
    <property type="chains" value="A=29-126"/>
</dbReference>
<dbReference type="PDBsum" id="1J5C"/>
<dbReference type="PDBsum" id="1J5D"/>
<dbReference type="PDBsum" id="1JXD"/>
<dbReference type="PDBsum" id="1JXF"/>
<dbReference type="PDBsum" id="1M9W"/>
<dbReference type="PDBsum" id="1PCS"/>
<dbReference type="BMRB" id="P21697"/>
<dbReference type="SMR" id="P21697"/>
<dbReference type="IntAct" id="P21697">
    <property type="interactions" value="2"/>
</dbReference>
<dbReference type="STRING" id="1148.gene:10499726"/>
<dbReference type="PaxDb" id="1148-1001599"/>
<dbReference type="EnsemblBacteria" id="BAA10227">
    <property type="protein sequence ID" value="BAA10227"/>
    <property type="gene ID" value="BAA10227"/>
</dbReference>
<dbReference type="KEGG" id="syn:sll0199"/>
<dbReference type="eggNOG" id="COG3794">
    <property type="taxonomic scope" value="Bacteria"/>
</dbReference>
<dbReference type="InParanoid" id="P21697"/>
<dbReference type="PhylomeDB" id="P21697"/>
<dbReference type="EvolutionaryTrace" id="P21697"/>
<dbReference type="Proteomes" id="UP000001425">
    <property type="component" value="Chromosome"/>
</dbReference>
<dbReference type="GO" id="GO:0031676">
    <property type="term" value="C:plasma membrane-derived thylakoid membrane"/>
    <property type="evidence" value="ECO:0007669"/>
    <property type="project" value="UniProtKB-SubCell"/>
</dbReference>
<dbReference type="GO" id="GO:0005507">
    <property type="term" value="F:copper ion binding"/>
    <property type="evidence" value="ECO:0007669"/>
    <property type="project" value="UniProtKB-UniRule"/>
</dbReference>
<dbReference type="GO" id="GO:0009055">
    <property type="term" value="F:electron transfer activity"/>
    <property type="evidence" value="ECO:0007669"/>
    <property type="project" value="UniProtKB-UniRule"/>
</dbReference>
<dbReference type="CDD" id="cd04219">
    <property type="entry name" value="Plastocyanin"/>
    <property type="match status" value="1"/>
</dbReference>
<dbReference type="Gene3D" id="2.60.40.420">
    <property type="entry name" value="Cupredoxins - blue copper proteins"/>
    <property type="match status" value="1"/>
</dbReference>
<dbReference type="HAMAP" id="MF_00566">
    <property type="entry name" value="Cytb6_f_plastocyanin"/>
    <property type="match status" value="1"/>
</dbReference>
<dbReference type="InterPro" id="IPR000923">
    <property type="entry name" value="BlueCu_1"/>
</dbReference>
<dbReference type="InterPro" id="IPR028871">
    <property type="entry name" value="BlueCu_1_BS"/>
</dbReference>
<dbReference type="InterPro" id="IPR001235">
    <property type="entry name" value="Copper_blue_Plastocyanin"/>
</dbReference>
<dbReference type="InterPro" id="IPR008972">
    <property type="entry name" value="Cupredoxin"/>
</dbReference>
<dbReference type="InterPro" id="IPR002387">
    <property type="entry name" value="Plastocyanin"/>
</dbReference>
<dbReference type="InterPro" id="IPR023511">
    <property type="entry name" value="Plastocyanin_cyanobac"/>
</dbReference>
<dbReference type="NCBIfam" id="TIGR02656">
    <property type="entry name" value="cyanin_plasto"/>
    <property type="match status" value="1"/>
</dbReference>
<dbReference type="PANTHER" id="PTHR34192">
    <property type="entry name" value="PLASTOCYANIN MAJOR ISOFORM, CHLOROPLASTIC-RELATED"/>
    <property type="match status" value="1"/>
</dbReference>
<dbReference type="PANTHER" id="PTHR34192:SF10">
    <property type="entry name" value="PLASTOCYANIN MAJOR ISOFORM, CHLOROPLASTIC-RELATED"/>
    <property type="match status" value="1"/>
</dbReference>
<dbReference type="Pfam" id="PF00127">
    <property type="entry name" value="Copper-bind"/>
    <property type="match status" value="1"/>
</dbReference>
<dbReference type="PRINTS" id="PR00156">
    <property type="entry name" value="COPPERBLUE"/>
</dbReference>
<dbReference type="PRINTS" id="PR00157">
    <property type="entry name" value="PLASTOCYANIN"/>
</dbReference>
<dbReference type="SUPFAM" id="SSF49503">
    <property type="entry name" value="Cupredoxins"/>
    <property type="match status" value="1"/>
</dbReference>
<dbReference type="PROSITE" id="PS00196">
    <property type="entry name" value="COPPER_BLUE"/>
    <property type="match status" value="1"/>
</dbReference>
<gene>
    <name type="primary">petE</name>
    <name type="ordered locus">sll0199</name>
</gene>
<organism>
    <name type="scientific">Synechocystis sp. (strain ATCC 27184 / PCC 6803 / Kazusa)</name>
    <dbReference type="NCBI Taxonomy" id="1111708"/>
    <lineage>
        <taxon>Bacteria</taxon>
        <taxon>Bacillati</taxon>
        <taxon>Cyanobacteriota</taxon>
        <taxon>Cyanophyceae</taxon>
        <taxon>Synechococcales</taxon>
        <taxon>Merismopediaceae</taxon>
        <taxon>Synechocystis</taxon>
    </lineage>
</organism>
<proteinExistence type="evidence at protein level"/>
<comment type="function">
    <text evidence="1 4">Participates in electron transfer between P700 and the cytochrome b6-f complex in photosystem I.</text>
</comment>
<comment type="cofactor">
    <cofactor evidence="1 4">
        <name>Cu(2+)</name>
        <dbReference type="ChEBI" id="CHEBI:29036"/>
    </cofactor>
</comment>
<comment type="subcellular location">
    <subcellularLocation>
        <location evidence="4">Cellular thylakoid membrane</location>
        <topology evidence="4">Peripheral membrane protein</topology>
        <orientation evidence="4">Lumenal side</orientation>
    </subcellularLocation>
    <text>Loosely bound to the thylakoid inner membrane surface (PubMed:9466912).</text>
</comment>
<comment type="induction">
    <text evidence="2">By copper.</text>
</comment>
<comment type="similarity">
    <text evidence="1">Belongs to the plastocyanin family.</text>
</comment>
<protein>
    <recommendedName>
        <fullName>Plastocyanin</fullName>
    </recommendedName>
</protein>
<evidence type="ECO:0000255" key="1">
    <source>
        <dbReference type="HAMAP-Rule" id="MF_00566"/>
    </source>
</evidence>
<evidence type="ECO:0000269" key="2">
    <source>
    </source>
</evidence>
<evidence type="ECO:0000269" key="3">
    <source>
    </source>
</evidence>
<evidence type="ECO:0000269" key="4">
    <source>
    </source>
</evidence>
<evidence type="ECO:0007829" key="5">
    <source>
        <dbReference type="PDB" id="1J5C"/>
    </source>
</evidence>
<evidence type="ECO:0007829" key="6">
    <source>
        <dbReference type="PDB" id="1J5D"/>
    </source>
</evidence>
<evidence type="ECO:0007829" key="7">
    <source>
        <dbReference type="PDB" id="1PCS"/>
    </source>
</evidence>
<keyword id="KW-0002">3D-structure</keyword>
<keyword id="KW-0186">Copper</keyword>
<keyword id="KW-0903">Direct protein sequencing</keyword>
<keyword id="KW-0249">Electron transport</keyword>
<keyword id="KW-0472">Membrane</keyword>
<keyword id="KW-0479">Metal-binding</keyword>
<keyword id="KW-1185">Reference proteome</keyword>
<keyword id="KW-0732">Signal</keyword>
<keyword id="KW-0793">Thylakoid</keyword>
<keyword id="KW-0813">Transport</keyword>
<feature type="signal peptide" evidence="3">
    <location>
        <begin position="1"/>
        <end position="28"/>
    </location>
</feature>
<feature type="chain" id="PRO_0000002904" description="Plastocyanin">
    <location>
        <begin position="29"/>
        <end position="126"/>
    </location>
</feature>
<feature type="domain" description="Plastocyanin-like">
    <location>
        <begin position="29"/>
        <end position="126"/>
    </location>
</feature>
<feature type="binding site" evidence="4">
    <location>
        <position position="67"/>
    </location>
    <ligand>
        <name>Cu cation</name>
        <dbReference type="ChEBI" id="CHEBI:23378"/>
    </ligand>
</feature>
<feature type="binding site" evidence="4">
    <location>
        <position position="111"/>
    </location>
    <ligand>
        <name>Cu cation</name>
        <dbReference type="ChEBI" id="CHEBI:23378"/>
    </ligand>
</feature>
<feature type="binding site" evidence="4">
    <location>
        <position position="114"/>
    </location>
    <ligand>
        <name>Cu cation</name>
        <dbReference type="ChEBI" id="CHEBI:23378"/>
    </ligand>
</feature>
<feature type="binding site" evidence="4">
    <location>
        <position position="119"/>
    </location>
    <ligand>
        <name>Cu cation</name>
        <dbReference type="ChEBI" id="CHEBI:23378"/>
    </ligand>
</feature>
<feature type="strand" evidence="7">
    <location>
        <begin position="31"/>
        <end position="36"/>
    </location>
</feature>
<feature type="strand" evidence="5">
    <location>
        <begin position="38"/>
        <end position="40"/>
    </location>
</feature>
<feature type="strand" evidence="7">
    <location>
        <begin position="42"/>
        <end position="52"/>
    </location>
</feature>
<feature type="strand" evidence="7">
    <location>
        <begin position="56"/>
        <end position="61"/>
    </location>
</feature>
<feature type="strand" evidence="6">
    <location>
        <begin position="63"/>
        <end position="65"/>
    </location>
</feature>
<feature type="strand" evidence="7">
    <location>
        <begin position="67"/>
        <end position="71"/>
    </location>
</feature>
<feature type="strand" evidence="7">
    <location>
        <begin position="74"/>
        <end position="76"/>
    </location>
</feature>
<feature type="helix" evidence="7">
    <location>
        <begin position="78"/>
        <end position="84"/>
    </location>
</feature>
<feature type="strand" evidence="7">
    <location>
        <begin position="86"/>
        <end position="90"/>
    </location>
</feature>
<feature type="strand" evidence="7">
    <location>
        <begin position="96"/>
        <end position="100"/>
    </location>
</feature>
<feature type="strand" evidence="7">
    <location>
        <begin position="105"/>
        <end position="110"/>
    </location>
</feature>
<feature type="helix" evidence="7">
    <location>
        <begin position="112"/>
        <end position="114"/>
    </location>
</feature>
<feature type="turn" evidence="7">
    <location>
        <begin position="115"/>
        <end position="118"/>
    </location>
</feature>
<feature type="strand" evidence="7">
    <location>
        <begin position="120"/>
        <end position="126"/>
    </location>
</feature>
<accession>P21697</accession>
<sequence length="126" mass="13146">MSKKFLTILAGLLLVVSSFFLSVSPAAAANATVKMGSDSGALVFEPSTVTIKAGEEVKWVNNKLSPHNIVFAADGVDADTAAKLSHKGLAFAAGESFTSTFTEPGTYTYYCEPHRGAGMVGKVVVE</sequence>
<reference key="1">
    <citation type="journal article" date="1990" name="Plant Mol. Biol.">
        <title>Copper-induced expression, cloning, and regulatory studies of the plastocyanin gene from the cyanobacterium Synechocystis sp. PCC 6803.</title>
        <authorList>
            <person name="Briggs L.M."/>
            <person name="Pecoraro V.L."/>
            <person name="McIntosh L."/>
        </authorList>
    </citation>
    <scope>NUCLEOTIDE SEQUENCE [GENOMIC DNA]</scope>
    <scope>INDUCTION BY COPPER</scope>
</reference>
<reference key="2">
    <citation type="journal article" date="1995" name="DNA Res.">
        <title>Sequence analysis of the genome of the unicellular cyanobacterium Synechocystis sp. strain PCC6803. I. Sequence features in the 1 Mb region from map positions 64% to 92% of the genome.</title>
        <authorList>
            <person name="Kaneko T."/>
            <person name="Tanaka A."/>
            <person name="Sato S."/>
            <person name="Kotani H."/>
            <person name="Sazuka T."/>
            <person name="Miyajima N."/>
            <person name="Sugiura M."/>
            <person name="Tabata S."/>
        </authorList>
    </citation>
    <scope>NUCLEOTIDE SEQUENCE [LARGE SCALE GENOMIC DNA]</scope>
    <source>
        <strain>ATCC 27184 / PCC 6803 / N-1</strain>
    </source>
</reference>
<reference key="3">
    <citation type="journal article" date="1996" name="DNA Res.">
        <title>Sequence analysis of the genome of the unicellular cyanobacterium Synechocystis sp. strain PCC6803. II. Sequence determination of the entire genome and assignment of potential protein-coding regions.</title>
        <authorList>
            <person name="Kaneko T."/>
            <person name="Sato S."/>
            <person name="Kotani H."/>
            <person name="Tanaka A."/>
            <person name="Asamizu E."/>
            <person name="Nakamura Y."/>
            <person name="Miyajima N."/>
            <person name="Hirosawa M."/>
            <person name="Sugiura M."/>
            <person name="Sasamoto S."/>
            <person name="Kimura T."/>
            <person name="Hosouchi T."/>
            <person name="Matsuno A."/>
            <person name="Muraki A."/>
            <person name="Nakazaki N."/>
            <person name="Naruo K."/>
            <person name="Okumura S."/>
            <person name="Shimpo S."/>
            <person name="Takeuchi C."/>
            <person name="Wada T."/>
            <person name="Watanabe A."/>
            <person name="Yamada M."/>
            <person name="Yasuda M."/>
            <person name="Tabata S."/>
        </authorList>
    </citation>
    <scope>NUCLEOTIDE SEQUENCE [LARGE SCALE GENOMIC DNA]</scope>
    <source>
        <strain>ATCC 27184 / PCC 6803 / Kazusa</strain>
    </source>
</reference>
<reference key="4">
    <citation type="journal article" date="1997" name="Electrophoresis">
        <title>Towards a proteome project of cyanobacterium Synechocystis sp. strain PCC6803: linking 130 protein spots with their respective genes.</title>
        <authorList>
            <person name="Sazuka T."/>
            <person name="Ohara O."/>
        </authorList>
    </citation>
    <scope>PROTEIN SEQUENCE OF 29-47</scope>
</reference>
<reference key="5">
    <citation type="journal article" date="1998" name="J. Mol. Biol.">
        <title>The 2.15 A crystal structure of a triple mutant plastocyanin from the cyanobacterium Synechocystis sp. PCC 6803.</title>
        <authorList>
            <person name="Romero A."/>
            <person name="de la Cerda B."/>
            <person name="Varela P.F."/>
            <person name="Navarro J.A."/>
            <person name="Hervas M."/>
            <person name="de la Rosa M.A."/>
        </authorList>
    </citation>
    <scope>X-RAY CRYSTALLOGRAPHY (2.15 ANGSTROMS) OF 29-126 IN COMPLEX WITH COPPER</scope>
    <scope>FUNCTION</scope>
    <scope>COFACTOR</scope>
    <scope>SUBCELLULAR LOCATION</scope>
</reference>